<dbReference type="EMBL" id="Z71928">
    <property type="protein sequence ID" value="CAA96478.1"/>
    <property type="status" value="ALT_FRAME"/>
    <property type="molecule type" value="Genomic_DNA"/>
</dbReference>
<dbReference type="EMBL" id="Z71928">
    <property type="protein sequence ID" value="CAA96479.1"/>
    <property type="status" value="ALT_FRAME"/>
    <property type="molecule type" value="Genomic_DNA"/>
</dbReference>
<dbReference type="EMBL" id="Z94043">
    <property type="protein sequence ID" value="CAB07994.1"/>
    <property type="status" value="ALT_FRAME"/>
    <property type="molecule type" value="Genomic_DNA"/>
</dbReference>
<dbReference type="EMBL" id="Z94043">
    <property type="protein sequence ID" value="CAB07995.1"/>
    <property type="status" value="ALT_FRAME"/>
    <property type="molecule type" value="Genomic_DNA"/>
</dbReference>
<dbReference type="EMBL" id="AL009126">
    <property type="protein sequence ID" value="CAX52695.1"/>
    <property type="molecule type" value="Genomic_DNA"/>
</dbReference>
<dbReference type="PIR" id="B70037">
    <property type="entry name" value="B70037"/>
</dbReference>
<dbReference type="PIR" id="C70037">
    <property type="entry name" value="C70037"/>
</dbReference>
<dbReference type="RefSeq" id="WP_010886617.1">
    <property type="nucleotide sequence ID" value="NZ_OZ025638.1"/>
</dbReference>
<dbReference type="RefSeq" id="YP_003097789.1">
    <property type="nucleotide sequence ID" value="NC_000964.3"/>
</dbReference>
<dbReference type="SMR" id="P71060"/>
<dbReference type="FunCoup" id="P71060">
    <property type="interactions" value="14"/>
</dbReference>
<dbReference type="STRING" id="224308.BSU34265"/>
<dbReference type="PaxDb" id="224308-BSU34265"/>
<dbReference type="EnsemblBacteria" id="CAX52695">
    <property type="protein sequence ID" value="CAX52695"/>
    <property type="gene ID" value="BSU_34265"/>
</dbReference>
<dbReference type="GeneID" id="8302980"/>
<dbReference type="KEGG" id="bsu:BSU34265"/>
<dbReference type="PATRIC" id="fig|224308.179.peg.3713"/>
<dbReference type="eggNOG" id="COG2244">
    <property type="taxonomic scope" value="Bacteria"/>
</dbReference>
<dbReference type="InParanoid" id="P71060"/>
<dbReference type="OrthoDB" id="3224024at2"/>
<dbReference type="BioCyc" id="BSUB:BSU34265-MONOMER"/>
<dbReference type="Proteomes" id="UP000001570">
    <property type="component" value="Chromosome"/>
</dbReference>
<dbReference type="GO" id="GO:0005886">
    <property type="term" value="C:plasma membrane"/>
    <property type="evidence" value="ECO:0000318"/>
    <property type="project" value="GO_Central"/>
</dbReference>
<dbReference type="GO" id="GO:0000271">
    <property type="term" value="P:polysaccharide biosynthetic process"/>
    <property type="evidence" value="ECO:0007669"/>
    <property type="project" value="UniProtKB-KW"/>
</dbReference>
<dbReference type="CDD" id="cd12082">
    <property type="entry name" value="MATE_like"/>
    <property type="match status" value="1"/>
</dbReference>
<dbReference type="InterPro" id="IPR050833">
    <property type="entry name" value="Poly_Biosynth_Transport"/>
</dbReference>
<dbReference type="InterPro" id="IPR002797">
    <property type="entry name" value="Polysacc_synth"/>
</dbReference>
<dbReference type="PANTHER" id="PTHR30250:SF26">
    <property type="entry name" value="PSMA PROTEIN"/>
    <property type="match status" value="1"/>
</dbReference>
<dbReference type="PANTHER" id="PTHR30250">
    <property type="entry name" value="PST FAMILY PREDICTED COLANIC ACID TRANSPORTER"/>
    <property type="match status" value="1"/>
</dbReference>
<dbReference type="Pfam" id="PF01943">
    <property type="entry name" value="Polysacc_synt"/>
    <property type="match status" value="1"/>
</dbReference>
<proteinExistence type="evidence at transcript level"/>
<accession>P71060</accession>
<accession>C0H3R6</accession>
<accession>O08179</accession>
<accession>P71061</accession>
<accession>Q795I9</accession>
<accession>Q795J0</accession>
<accession>Q798P4</accession>
<organism>
    <name type="scientific">Bacillus subtilis (strain 168)</name>
    <dbReference type="NCBI Taxonomy" id="224308"/>
    <lineage>
        <taxon>Bacteria</taxon>
        <taxon>Bacillati</taxon>
        <taxon>Bacillota</taxon>
        <taxon>Bacilli</taxon>
        <taxon>Bacillales</taxon>
        <taxon>Bacillaceae</taxon>
        <taxon>Bacillus</taxon>
    </lineage>
</organism>
<sequence length="505" mass="55055">MKFTINFSANLTAFLLSVFLSVWMTPFIVKTLGVEAFGFVHLTQNVINYFSVITVALSSVVVRFFSVAAHRGEREKANAYISNYLAASVLISLLLLLPLAGSAFFIDRVMNVPQALLADVRLSILIGSVLFILTFLMAGFGAAPFYANRLYITSSIQAVQMLIRVLSVLLLFACFAPKIWQIQLAALAGAVIASVLSFYFFKKLIPWFSFRMKDLSFRTSKELFQAGAWSSVNQIGVLLFLQIDLLTANLMLGASASGKYAAIIQFPLLLRSLAGTVASLFAPIMTSYYSKGDMEGLMNYANKAVRLNGLLLALPAALLGGLAGPFLTIWLGPSFSTIAPLLFIHAGYLVVSLAFMPLFYIWTAFNQQKTPAIVTLLLGAVNVVLAVTLSGPAHLGLYGITLAGAISLILKNAIFTPLYVSRITGYKKHVFLKGIIGPLSAAVFAWTVCKAIQFIVKIDSWPSLIATGVTVSFCYAVFAFMLVCTKEERQLVLKRFRKTKGAVNL</sequence>
<comment type="function">
    <text>May be involved in the production of the exopolysaccharide (EPS) component of the extracellular matrix during biofilm formation. EPS is responsible for the adhesion of chains of cells into bundles.</text>
</comment>
<comment type="subcellular location">
    <subcellularLocation>
        <location evidence="3">Cell membrane</location>
        <topology evidence="3">Multi-pass membrane protein</topology>
    </subcellularLocation>
</comment>
<comment type="induction">
    <text evidence="2">Repressed by SinR.</text>
</comment>
<comment type="sequence caution" evidence="3">
    <conflict type="frameshift">
        <sequence resource="EMBL-CDS" id="CAA96478"/>
    </conflict>
</comment>
<comment type="sequence caution" evidence="3">
    <conflict type="frameshift">
        <sequence resource="EMBL-CDS" id="CAA96479"/>
    </conflict>
</comment>
<comment type="sequence caution" evidence="3">
    <conflict type="frameshift">
        <sequence resource="EMBL-CDS" id="CAB07994"/>
    </conflict>
</comment>
<comment type="sequence caution" evidence="3">
    <conflict type="frameshift">
        <sequence resource="EMBL-CDS" id="CAB07995"/>
    </conflict>
</comment>
<name>EPSK_BACSU</name>
<keyword id="KW-1003">Cell membrane</keyword>
<keyword id="KW-0270">Exopolysaccharide synthesis</keyword>
<keyword id="KW-0472">Membrane</keyword>
<keyword id="KW-1185">Reference proteome</keyword>
<keyword id="KW-0812">Transmembrane</keyword>
<keyword id="KW-1133">Transmembrane helix</keyword>
<feature type="chain" id="PRO_0000360684" description="Uncharacterized membrane protein EpsK">
    <location>
        <begin position="1"/>
        <end position="505"/>
    </location>
</feature>
<feature type="transmembrane region" description="Helical" evidence="1">
    <location>
        <begin position="9"/>
        <end position="29"/>
    </location>
</feature>
<feature type="transmembrane region" description="Helical" evidence="1">
    <location>
        <begin position="49"/>
        <end position="69"/>
    </location>
</feature>
<feature type="transmembrane region" description="Helical" evidence="1">
    <location>
        <begin position="86"/>
        <end position="106"/>
    </location>
</feature>
<feature type="transmembrane region" description="Helical" evidence="1">
    <location>
        <begin position="122"/>
        <end position="142"/>
    </location>
</feature>
<feature type="transmembrane region" description="Helical" evidence="1">
    <location>
        <begin position="156"/>
        <end position="176"/>
    </location>
</feature>
<feature type="transmembrane region" description="Helical" evidence="1">
    <location>
        <begin position="181"/>
        <end position="201"/>
    </location>
</feature>
<feature type="transmembrane region" description="Helical" evidence="1">
    <location>
        <begin position="235"/>
        <end position="255"/>
    </location>
</feature>
<feature type="transmembrane region" description="Helical" evidence="1">
    <location>
        <begin position="261"/>
        <end position="281"/>
    </location>
</feature>
<feature type="transmembrane region" description="Helical" evidence="1">
    <location>
        <begin position="310"/>
        <end position="330"/>
    </location>
</feature>
<feature type="transmembrane region" description="Helical" evidence="1">
    <location>
        <begin position="341"/>
        <end position="361"/>
    </location>
</feature>
<feature type="transmembrane region" description="Helical" evidence="1">
    <location>
        <begin position="371"/>
        <end position="391"/>
    </location>
</feature>
<feature type="transmembrane region" description="Helical" evidence="1">
    <location>
        <begin position="395"/>
        <end position="415"/>
    </location>
</feature>
<feature type="transmembrane region" description="Helical" evidence="1">
    <location>
        <begin position="435"/>
        <end position="455"/>
    </location>
</feature>
<feature type="transmembrane region" description="Helical" evidence="1">
    <location>
        <begin position="464"/>
        <end position="484"/>
    </location>
</feature>
<reference key="1">
    <citation type="journal article" date="1996" name="Microbiology">
        <title>Integrated mapping and sequencing of a 115 kb DNA fragment from Bacillus subtilis: sequence analysis of a 21 kb segment containing the sigL locus.</title>
        <authorList>
            <person name="Fabret C."/>
            <person name="Quentin Y."/>
            <person name="Chapal N."/>
            <person name="Guiseppi A."/>
            <person name="Haiech J."/>
            <person name="Denizot F."/>
        </authorList>
    </citation>
    <scope>NUCLEOTIDE SEQUENCE [GENOMIC DNA]</scope>
    <source>
        <strain>168</strain>
    </source>
</reference>
<reference key="2">
    <citation type="submission" date="1997-04" db="EMBL/GenBank/DDBJ databases">
        <authorList>
            <person name="Denizot F."/>
        </authorList>
    </citation>
    <scope>NUCLEOTIDE SEQUENCE [GENOMIC DNA]</scope>
    <source>
        <strain>168</strain>
    </source>
</reference>
<reference key="3">
    <citation type="journal article" date="1997" name="Nature">
        <title>The complete genome sequence of the Gram-positive bacterium Bacillus subtilis.</title>
        <authorList>
            <person name="Kunst F."/>
            <person name="Ogasawara N."/>
            <person name="Moszer I."/>
            <person name="Albertini A.M."/>
            <person name="Alloni G."/>
            <person name="Azevedo V."/>
            <person name="Bertero M.G."/>
            <person name="Bessieres P."/>
            <person name="Bolotin A."/>
            <person name="Borchert S."/>
            <person name="Borriss R."/>
            <person name="Boursier L."/>
            <person name="Brans A."/>
            <person name="Braun M."/>
            <person name="Brignell S.C."/>
            <person name="Bron S."/>
            <person name="Brouillet S."/>
            <person name="Bruschi C.V."/>
            <person name="Caldwell B."/>
            <person name="Capuano V."/>
            <person name="Carter N.M."/>
            <person name="Choi S.-K."/>
            <person name="Codani J.-J."/>
            <person name="Connerton I.F."/>
            <person name="Cummings N.J."/>
            <person name="Daniel R.A."/>
            <person name="Denizot F."/>
            <person name="Devine K.M."/>
            <person name="Duesterhoeft A."/>
            <person name="Ehrlich S.D."/>
            <person name="Emmerson P.T."/>
            <person name="Entian K.-D."/>
            <person name="Errington J."/>
            <person name="Fabret C."/>
            <person name="Ferrari E."/>
            <person name="Foulger D."/>
            <person name="Fritz C."/>
            <person name="Fujita M."/>
            <person name="Fujita Y."/>
            <person name="Fuma S."/>
            <person name="Galizzi A."/>
            <person name="Galleron N."/>
            <person name="Ghim S.-Y."/>
            <person name="Glaser P."/>
            <person name="Goffeau A."/>
            <person name="Golightly E.J."/>
            <person name="Grandi G."/>
            <person name="Guiseppi G."/>
            <person name="Guy B.J."/>
            <person name="Haga K."/>
            <person name="Haiech J."/>
            <person name="Harwood C.R."/>
            <person name="Henaut A."/>
            <person name="Hilbert H."/>
            <person name="Holsappel S."/>
            <person name="Hosono S."/>
            <person name="Hullo M.-F."/>
            <person name="Itaya M."/>
            <person name="Jones L.-M."/>
            <person name="Joris B."/>
            <person name="Karamata D."/>
            <person name="Kasahara Y."/>
            <person name="Klaerr-Blanchard M."/>
            <person name="Klein C."/>
            <person name="Kobayashi Y."/>
            <person name="Koetter P."/>
            <person name="Koningstein G."/>
            <person name="Krogh S."/>
            <person name="Kumano M."/>
            <person name="Kurita K."/>
            <person name="Lapidus A."/>
            <person name="Lardinois S."/>
            <person name="Lauber J."/>
            <person name="Lazarevic V."/>
            <person name="Lee S.-M."/>
            <person name="Levine A."/>
            <person name="Liu H."/>
            <person name="Masuda S."/>
            <person name="Mauel C."/>
            <person name="Medigue C."/>
            <person name="Medina N."/>
            <person name="Mellado R.P."/>
            <person name="Mizuno M."/>
            <person name="Moestl D."/>
            <person name="Nakai S."/>
            <person name="Noback M."/>
            <person name="Noone D."/>
            <person name="O'Reilly M."/>
            <person name="Ogawa K."/>
            <person name="Ogiwara A."/>
            <person name="Oudega B."/>
            <person name="Park S.-H."/>
            <person name="Parro V."/>
            <person name="Pohl T.M."/>
            <person name="Portetelle D."/>
            <person name="Porwollik S."/>
            <person name="Prescott A.M."/>
            <person name="Presecan E."/>
            <person name="Pujic P."/>
            <person name="Purnelle B."/>
            <person name="Rapoport G."/>
            <person name="Rey M."/>
            <person name="Reynolds S."/>
            <person name="Rieger M."/>
            <person name="Rivolta C."/>
            <person name="Rocha E."/>
            <person name="Roche B."/>
            <person name="Rose M."/>
            <person name="Sadaie Y."/>
            <person name="Sato T."/>
            <person name="Scanlan E."/>
            <person name="Schleich S."/>
            <person name="Schroeter R."/>
            <person name="Scoffone F."/>
            <person name="Sekiguchi J."/>
            <person name="Sekowska A."/>
            <person name="Seror S.J."/>
            <person name="Serror P."/>
            <person name="Shin B.-S."/>
            <person name="Soldo B."/>
            <person name="Sorokin A."/>
            <person name="Tacconi E."/>
            <person name="Takagi T."/>
            <person name="Takahashi H."/>
            <person name="Takemaru K."/>
            <person name="Takeuchi M."/>
            <person name="Tamakoshi A."/>
            <person name="Tanaka T."/>
            <person name="Terpstra P."/>
            <person name="Tognoni A."/>
            <person name="Tosato V."/>
            <person name="Uchiyama S."/>
            <person name="Vandenbol M."/>
            <person name="Vannier F."/>
            <person name="Vassarotti A."/>
            <person name="Viari A."/>
            <person name="Wambutt R."/>
            <person name="Wedler E."/>
            <person name="Wedler H."/>
            <person name="Weitzenegger T."/>
            <person name="Winters P."/>
            <person name="Wipat A."/>
            <person name="Yamamoto H."/>
            <person name="Yamane K."/>
            <person name="Yasumoto K."/>
            <person name="Yata K."/>
            <person name="Yoshida K."/>
            <person name="Yoshikawa H.-F."/>
            <person name="Zumstein E."/>
            <person name="Yoshikawa H."/>
            <person name="Danchin A."/>
        </authorList>
    </citation>
    <scope>NUCLEOTIDE SEQUENCE [LARGE SCALE GENOMIC DNA]</scope>
    <source>
        <strain>168</strain>
    </source>
</reference>
<reference key="4">
    <citation type="journal article" date="2009" name="Microbiology">
        <title>From a consortium sequence to a unified sequence: the Bacillus subtilis 168 reference genome a decade later.</title>
        <authorList>
            <person name="Barbe V."/>
            <person name="Cruveiller S."/>
            <person name="Kunst F."/>
            <person name="Lenoble P."/>
            <person name="Meurice G."/>
            <person name="Sekowska A."/>
            <person name="Vallenet D."/>
            <person name="Wang T."/>
            <person name="Moszer I."/>
            <person name="Medigue C."/>
            <person name="Danchin A."/>
        </authorList>
    </citation>
    <scope>SEQUENCE REVISION</scope>
</reference>
<reference key="5">
    <citation type="journal article" date="2005" name="Mol. Microbiol.">
        <title>A master regulator for biofilm formation by Bacillus subtilis.</title>
        <authorList>
            <person name="Kearns D.B."/>
            <person name="Chu F."/>
            <person name="Branda S.S."/>
            <person name="Kolter R."/>
            <person name="Losick R."/>
        </authorList>
    </citation>
    <scope>PROBABLE FUNCTION</scope>
    <scope>IDENTIFICATION OF FRAMESHIFT</scope>
    <scope>INDUCTION</scope>
    <source>
        <strain>168</strain>
        <strain>3610</strain>
    </source>
</reference>
<protein>
    <recommendedName>
        <fullName>Uncharacterized membrane protein EpsK</fullName>
    </recommendedName>
</protein>
<gene>
    <name type="primary">epsK</name>
    <name type="synonym">yvfA/yvfB</name>
    <name type="ordered locus">BSU34265</name>
    <name type="ORF">BSU34270/BSU34260</name>
</gene>
<evidence type="ECO:0000255" key="1"/>
<evidence type="ECO:0000269" key="2">
    <source>
    </source>
</evidence>
<evidence type="ECO:0000305" key="3"/>